<name>RL372_ORYSJ</name>
<dbReference type="EMBL" id="AC104709">
    <property type="protein sequence ID" value="AAT58714.1"/>
    <property type="status" value="ALT_SEQ"/>
    <property type="molecule type" value="Genomic_DNA"/>
</dbReference>
<dbReference type="EMBL" id="AP008211">
    <property type="protein sequence ID" value="BAF18199.1"/>
    <property type="molecule type" value="Genomic_DNA"/>
</dbReference>
<dbReference type="EMBL" id="AP014961">
    <property type="protein sequence ID" value="BAS95276.1"/>
    <property type="molecule type" value="Genomic_DNA"/>
</dbReference>
<dbReference type="EMBL" id="CM000142">
    <property type="protein sequence ID" value="EEE64648.1"/>
    <property type="molecule type" value="Genomic_DNA"/>
</dbReference>
<dbReference type="EMBL" id="AK059395">
    <property type="protein sequence ID" value="BAG86978.1"/>
    <property type="molecule type" value="mRNA"/>
</dbReference>
<dbReference type="RefSeq" id="XP_015622290.1">
    <property type="nucleotide sequence ID" value="XM_015766804.1"/>
</dbReference>
<dbReference type="RefSeq" id="XP_015640519.1">
    <property type="nucleotide sequence ID" value="XM_015785033.1"/>
</dbReference>
<dbReference type="RefSeq" id="XP_015640520.1">
    <property type="nucleotide sequence ID" value="XM_015785034.1"/>
</dbReference>
<dbReference type="PDB" id="1YSH">
    <property type="method" value="EM"/>
    <property type="resolution" value="9.50 A"/>
    <property type="chains" value="D=10-82"/>
</dbReference>
<dbReference type="PDBsum" id="1YSH"/>
<dbReference type="SMR" id="P0DKK2"/>
<dbReference type="FunCoup" id="P0DKK2">
    <property type="interactions" value="1853"/>
</dbReference>
<dbReference type="STRING" id="39947.P0DKK2"/>
<dbReference type="PaxDb" id="39947-P0DKK2"/>
<dbReference type="EnsemblPlants" id="Os01t0679700-02">
    <property type="protein sequence ID" value="Os01t0679700-02"/>
    <property type="gene ID" value="Os01g0679700"/>
</dbReference>
<dbReference type="EnsemblPlants" id="Os05t0557000-01">
    <property type="protein sequence ID" value="Os05t0557000-01"/>
    <property type="gene ID" value="Os05g0557000"/>
</dbReference>
<dbReference type="Gramene" id="Os01t0679700-02">
    <property type="protein sequence ID" value="Os01t0679700-02"/>
    <property type="gene ID" value="Os01g0679700"/>
</dbReference>
<dbReference type="Gramene" id="Os05t0557000-01">
    <property type="protein sequence ID" value="Os05t0557000-01"/>
    <property type="gene ID" value="Os05g0557000"/>
</dbReference>
<dbReference type="KEGG" id="dosa:Os05g0557000"/>
<dbReference type="InParanoid" id="P0DKK2"/>
<dbReference type="OMA" id="GPRYGRK"/>
<dbReference type="OrthoDB" id="1842026at2759"/>
<dbReference type="Proteomes" id="UP000000763">
    <property type="component" value="Chromosome 5"/>
</dbReference>
<dbReference type="Proteomes" id="UP000007752">
    <property type="component" value="Chromosome 5"/>
</dbReference>
<dbReference type="Proteomes" id="UP000059680">
    <property type="component" value="Chromosome 5"/>
</dbReference>
<dbReference type="ExpressionAtlas" id="P0DKK2">
    <property type="expression patterns" value="baseline and differential"/>
</dbReference>
<dbReference type="GO" id="GO:0009536">
    <property type="term" value="C:plastid"/>
    <property type="evidence" value="ECO:0007669"/>
    <property type="project" value="UniProtKB-ARBA"/>
</dbReference>
<dbReference type="GO" id="GO:1990904">
    <property type="term" value="C:ribonucleoprotein complex"/>
    <property type="evidence" value="ECO:0007669"/>
    <property type="project" value="UniProtKB-KW"/>
</dbReference>
<dbReference type="GO" id="GO:0005840">
    <property type="term" value="C:ribosome"/>
    <property type="evidence" value="ECO:0007669"/>
    <property type="project" value="UniProtKB-KW"/>
</dbReference>
<dbReference type="GO" id="GO:0003735">
    <property type="term" value="F:structural constituent of ribosome"/>
    <property type="evidence" value="ECO:0007669"/>
    <property type="project" value="InterPro"/>
</dbReference>
<dbReference type="GO" id="GO:0008270">
    <property type="term" value="F:zinc ion binding"/>
    <property type="evidence" value="ECO:0007669"/>
    <property type="project" value="UniProtKB-KW"/>
</dbReference>
<dbReference type="GO" id="GO:0006412">
    <property type="term" value="P:translation"/>
    <property type="evidence" value="ECO:0007669"/>
    <property type="project" value="InterPro"/>
</dbReference>
<dbReference type="FunFam" id="2.20.25.30:FF:000002">
    <property type="entry name" value="60S ribosomal protein L37a"/>
    <property type="match status" value="1"/>
</dbReference>
<dbReference type="Gene3D" id="2.20.25.30">
    <property type="match status" value="1"/>
</dbReference>
<dbReference type="HAMAP" id="MF_00327">
    <property type="entry name" value="Ribosomal_eL43"/>
    <property type="match status" value="1"/>
</dbReference>
<dbReference type="InterPro" id="IPR011331">
    <property type="entry name" value="Ribosomal_eL37/eL43"/>
</dbReference>
<dbReference type="InterPro" id="IPR002674">
    <property type="entry name" value="Ribosomal_eL43"/>
</dbReference>
<dbReference type="InterPro" id="IPR011332">
    <property type="entry name" value="Ribosomal_zn-bd"/>
</dbReference>
<dbReference type="NCBIfam" id="TIGR00280">
    <property type="entry name" value="eL43_euk_arch"/>
    <property type="match status" value="1"/>
</dbReference>
<dbReference type="NCBIfam" id="NF003058">
    <property type="entry name" value="PRK03976.1"/>
    <property type="match status" value="1"/>
</dbReference>
<dbReference type="PANTHER" id="PTHR48149">
    <property type="entry name" value="60S RIBOSOMAL PROTEIN L37A-2"/>
    <property type="match status" value="1"/>
</dbReference>
<dbReference type="PANTHER" id="PTHR48149:SF1">
    <property type="entry name" value="LARGE RIBOSOMAL SUBUNIT PROTEIN EL43Y"/>
    <property type="match status" value="1"/>
</dbReference>
<dbReference type="Pfam" id="PF01780">
    <property type="entry name" value="Ribosomal_L37ae"/>
    <property type="match status" value="1"/>
</dbReference>
<dbReference type="SUPFAM" id="SSF57829">
    <property type="entry name" value="Zn-binding ribosomal proteins"/>
    <property type="match status" value="1"/>
</dbReference>
<reference key="1">
    <citation type="journal article" date="2005" name="Mol. Genet. Genomics">
        <title>A fine physical map of the rice chromosome 5.</title>
        <authorList>
            <person name="Cheng C.-H."/>
            <person name="Chung M.C."/>
            <person name="Liu S.-M."/>
            <person name="Chen S.-K."/>
            <person name="Kao F.Y."/>
            <person name="Lin S.-J."/>
            <person name="Hsiao S.-H."/>
            <person name="Tseng I.C."/>
            <person name="Hsing Y.-I.C."/>
            <person name="Wu H.-P."/>
            <person name="Chen C.-S."/>
            <person name="Shaw J.-F."/>
            <person name="Wu J."/>
            <person name="Matsumoto T."/>
            <person name="Sasaki T."/>
            <person name="Chen H.-C."/>
            <person name="Chow T.-Y."/>
        </authorList>
    </citation>
    <scope>NUCLEOTIDE SEQUENCE [LARGE SCALE GENOMIC DNA]</scope>
    <source>
        <strain>cv. Nipponbare</strain>
    </source>
</reference>
<reference key="2">
    <citation type="journal article" date="2005" name="Nature">
        <title>The map-based sequence of the rice genome.</title>
        <authorList>
            <consortium name="International rice genome sequencing project (IRGSP)"/>
        </authorList>
    </citation>
    <scope>NUCLEOTIDE SEQUENCE [LARGE SCALE GENOMIC DNA]</scope>
    <source>
        <strain>cv. Nipponbare</strain>
    </source>
</reference>
<reference key="3">
    <citation type="journal article" date="2008" name="Nucleic Acids Res.">
        <title>The rice annotation project database (RAP-DB): 2008 update.</title>
        <authorList>
            <consortium name="The rice annotation project (RAP)"/>
        </authorList>
    </citation>
    <scope>GENOME REANNOTATION</scope>
    <source>
        <strain>cv. Nipponbare</strain>
    </source>
</reference>
<reference key="4">
    <citation type="journal article" date="2013" name="Rice">
        <title>Improvement of the Oryza sativa Nipponbare reference genome using next generation sequence and optical map data.</title>
        <authorList>
            <person name="Kawahara Y."/>
            <person name="de la Bastide M."/>
            <person name="Hamilton J.P."/>
            <person name="Kanamori H."/>
            <person name="McCombie W.R."/>
            <person name="Ouyang S."/>
            <person name="Schwartz D.C."/>
            <person name="Tanaka T."/>
            <person name="Wu J."/>
            <person name="Zhou S."/>
            <person name="Childs K.L."/>
            <person name="Davidson R.M."/>
            <person name="Lin H."/>
            <person name="Quesada-Ocampo L."/>
            <person name="Vaillancourt B."/>
            <person name="Sakai H."/>
            <person name="Lee S.S."/>
            <person name="Kim J."/>
            <person name="Numa H."/>
            <person name="Itoh T."/>
            <person name="Buell C.R."/>
            <person name="Matsumoto T."/>
        </authorList>
    </citation>
    <scope>GENOME REANNOTATION</scope>
    <source>
        <strain>cv. Nipponbare</strain>
    </source>
</reference>
<reference key="5">
    <citation type="journal article" date="2005" name="PLoS Biol.">
        <title>The genomes of Oryza sativa: a history of duplications.</title>
        <authorList>
            <person name="Yu J."/>
            <person name="Wang J."/>
            <person name="Lin W."/>
            <person name="Li S."/>
            <person name="Li H."/>
            <person name="Zhou J."/>
            <person name="Ni P."/>
            <person name="Dong W."/>
            <person name="Hu S."/>
            <person name="Zeng C."/>
            <person name="Zhang J."/>
            <person name="Zhang Y."/>
            <person name="Li R."/>
            <person name="Xu Z."/>
            <person name="Li S."/>
            <person name="Li X."/>
            <person name="Zheng H."/>
            <person name="Cong L."/>
            <person name="Lin L."/>
            <person name="Yin J."/>
            <person name="Geng J."/>
            <person name="Li G."/>
            <person name="Shi J."/>
            <person name="Liu J."/>
            <person name="Lv H."/>
            <person name="Li J."/>
            <person name="Wang J."/>
            <person name="Deng Y."/>
            <person name="Ran L."/>
            <person name="Shi X."/>
            <person name="Wang X."/>
            <person name="Wu Q."/>
            <person name="Li C."/>
            <person name="Ren X."/>
            <person name="Wang J."/>
            <person name="Wang X."/>
            <person name="Li D."/>
            <person name="Liu D."/>
            <person name="Zhang X."/>
            <person name="Ji Z."/>
            <person name="Zhao W."/>
            <person name="Sun Y."/>
            <person name="Zhang Z."/>
            <person name="Bao J."/>
            <person name="Han Y."/>
            <person name="Dong L."/>
            <person name="Ji J."/>
            <person name="Chen P."/>
            <person name="Wu S."/>
            <person name="Liu J."/>
            <person name="Xiao Y."/>
            <person name="Bu D."/>
            <person name="Tan J."/>
            <person name="Yang L."/>
            <person name="Ye C."/>
            <person name="Zhang J."/>
            <person name="Xu J."/>
            <person name="Zhou Y."/>
            <person name="Yu Y."/>
            <person name="Zhang B."/>
            <person name="Zhuang S."/>
            <person name="Wei H."/>
            <person name="Liu B."/>
            <person name="Lei M."/>
            <person name="Yu H."/>
            <person name="Li Y."/>
            <person name="Xu H."/>
            <person name="Wei S."/>
            <person name="He X."/>
            <person name="Fang L."/>
            <person name="Zhang Z."/>
            <person name="Zhang Y."/>
            <person name="Huang X."/>
            <person name="Su Z."/>
            <person name="Tong W."/>
            <person name="Li J."/>
            <person name="Tong Z."/>
            <person name="Li S."/>
            <person name="Ye J."/>
            <person name="Wang L."/>
            <person name="Fang L."/>
            <person name="Lei T."/>
            <person name="Chen C.-S."/>
            <person name="Chen H.-C."/>
            <person name="Xu Z."/>
            <person name="Li H."/>
            <person name="Huang H."/>
            <person name="Zhang F."/>
            <person name="Xu H."/>
            <person name="Li N."/>
            <person name="Zhao C."/>
            <person name="Li S."/>
            <person name="Dong L."/>
            <person name="Huang Y."/>
            <person name="Li L."/>
            <person name="Xi Y."/>
            <person name="Qi Q."/>
            <person name="Li W."/>
            <person name="Zhang B."/>
            <person name="Hu W."/>
            <person name="Zhang Y."/>
            <person name="Tian X."/>
            <person name="Jiao Y."/>
            <person name="Liang X."/>
            <person name="Jin J."/>
            <person name="Gao L."/>
            <person name="Zheng W."/>
            <person name="Hao B."/>
            <person name="Liu S.-M."/>
            <person name="Wang W."/>
            <person name="Yuan L."/>
            <person name="Cao M."/>
            <person name="McDermott J."/>
            <person name="Samudrala R."/>
            <person name="Wang J."/>
            <person name="Wong G.K.-S."/>
            <person name="Yang H."/>
        </authorList>
    </citation>
    <scope>NUCLEOTIDE SEQUENCE [LARGE SCALE GENOMIC DNA]</scope>
    <source>
        <strain>cv. Nipponbare</strain>
    </source>
</reference>
<reference key="6">
    <citation type="journal article" date="2003" name="Science">
        <title>Collection, mapping, and annotation of over 28,000 cDNA clones from japonica rice.</title>
        <authorList>
            <consortium name="The rice full-length cDNA consortium"/>
        </authorList>
    </citation>
    <scope>NUCLEOTIDE SEQUENCE [LARGE SCALE MRNA]</scope>
    <source>
        <strain>cv. Nipponbare</strain>
    </source>
</reference>
<proteinExistence type="evidence at protein level"/>
<evidence type="ECO:0000305" key="1"/>
<feature type="chain" id="PRO_0000247608" description="Large ribosomal subunit protein eL43y">
    <location>
        <begin position="1"/>
        <end position="92"/>
    </location>
</feature>
<feature type="zinc finger region" description="C4-type">
    <location>
        <begin position="39"/>
        <end position="60"/>
    </location>
</feature>
<keyword id="KW-0002">3D-structure</keyword>
<keyword id="KW-0479">Metal-binding</keyword>
<keyword id="KW-1185">Reference proteome</keyword>
<keyword id="KW-0687">Ribonucleoprotein</keyword>
<keyword id="KW-0689">Ribosomal protein</keyword>
<keyword id="KW-0862">Zinc</keyword>
<keyword id="KW-0863">Zinc-finger</keyword>
<comment type="similarity">
    <text evidence="1">Belongs to the eukaryotic ribosomal protein eL43 family.</text>
</comment>
<comment type="sequence caution" evidence="1">
    <conflict type="erroneous gene model prediction">
        <sequence resource="EMBL-CDS" id="AAT58714"/>
    </conflict>
</comment>
<sequence>MTKRTKKAGIVGKYGTRYGASLRKQIKKMEVSQHSKYFCEFCGKFAVKRKAVGIWGCKDCGKVKAGGAYTMNTASAVTVRSTIRRLREQTEA</sequence>
<accession>P0DKK2</accession>
<accession>B7E3N1</accession>
<accession>Q0JKE6</accession>
<accession>Q5QM99</accession>
<accession>Q6I606</accession>
<protein>
    <recommendedName>
        <fullName evidence="1">Large ribosomal subunit protein eL43y</fullName>
    </recommendedName>
    <alternativeName>
        <fullName>60S ribosomal protein L37a-2</fullName>
    </alternativeName>
</protein>
<organism>
    <name type="scientific">Oryza sativa subsp. japonica</name>
    <name type="common">Rice</name>
    <dbReference type="NCBI Taxonomy" id="39947"/>
    <lineage>
        <taxon>Eukaryota</taxon>
        <taxon>Viridiplantae</taxon>
        <taxon>Streptophyta</taxon>
        <taxon>Embryophyta</taxon>
        <taxon>Tracheophyta</taxon>
        <taxon>Spermatophyta</taxon>
        <taxon>Magnoliopsida</taxon>
        <taxon>Liliopsida</taxon>
        <taxon>Poales</taxon>
        <taxon>Poaceae</taxon>
        <taxon>BOP clade</taxon>
        <taxon>Oryzoideae</taxon>
        <taxon>Oryzeae</taxon>
        <taxon>Oryzinae</taxon>
        <taxon>Oryza</taxon>
        <taxon>Oryza sativa</taxon>
    </lineage>
</organism>
<gene>
    <name type="ordered locus">Os05g0557000</name>
    <name type="ordered locus">LOC_Os05g48320</name>
    <name type="ORF">OJ1214_E03.13</name>
    <name type="ORF">OsJ_018715</name>
</gene>